<accession>Q9FJL3</accession>
<accession>B9DGC2</accession>
<accession>Q0WSA8</accession>
<protein>
    <recommendedName>
        <fullName>Peptidyl-prolyl cis-trans isomerase FKBP65</fullName>
        <shortName>PPIase FKBP65</shortName>
        <ecNumber>5.2.1.8</ecNumber>
    </recommendedName>
    <alternativeName>
        <fullName>70 kDa peptidyl-prolyl isomerase</fullName>
    </alternativeName>
    <alternativeName>
        <fullName>FK506-binding protein 65</fullName>
        <shortName>AtFKBP65</shortName>
    </alternativeName>
    <alternativeName>
        <fullName>Immunophilin FKBP65</fullName>
    </alternativeName>
    <alternativeName>
        <fullName>Peptidyl-prolyl isomerase ROF2</fullName>
    </alternativeName>
    <alternativeName>
        <fullName>Protein ROTAMASE FKBP 2</fullName>
    </alternativeName>
    <alternativeName>
        <fullName>Rotamase</fullName>
    </alternativeName>
</protein>
<evidence type="ECO:0000250" key="1"/>
<evidence type="ECO:0000250" key="2">
    <source>
        <dbReference type="UniProtKB" id="Q38931"/>
    </source>
</evidence>
<evidence type="ECO:0000255" key="3"/>
<evidence type="ECO:0000255" key="4">
    <source>
        <dbReference type="PROSITE-ProRule" id="PRU00277"/>
    </source>
</evidence>
<evidence type="ECO:0000256" key="5">
    <source>
        <dbReference type="SAM" id="MobiDB-lite"/>
    </source>
</evidence>
<evidence type="ECO:0000269" key="6">
    <source>
    </source>
</evidence>
<evidence type="ECO:0000269" key="7">
    <source>
    </source>
</evidence>
<evidence type="ECO:0000269" key="8">
    <source>
    </source>
</evidence>
<evidence type="ECO:0000269" key="9">
    <source>
    </source>
</evidence>
<evidence type="ECO:0000305" key="10"/>
<sequence>MEDDFDTQNQFPEEEPEEMDMDLPDNDEADSAPYLKIGEEMEIGKSGLKKKLVKECEKWDTPENGDEVEVHYTGTLLDGTKFDSSRDRGTPFKFTLGQGHVIKGWDLGIKTMKKGENAIFTIPPELAYGETGSPPTIPPNATLQFDVELIAWRSVKDICGDGGVSKKIIVEGEKWEKPKDLDEVYVKYEARLEDGTIVGKSDGVEFTVKEGHFCPALSKAVKTMKRGEKVLLTVKPQYGFGEFGRPASDGLQAAIPPNATLQIDLELVSWKTVVEVTDDRKVIKKILKEGEGYERPNEGAIVKLKLIGKLQDGTTVFVKKGHEEDEEPFEFKIDEEQVIEGLEKAVMGMKKGEVALITISPEYAFGSSESKQELAVIPPNSTVYYEVELVSFIKEKESWDMNTQERIEAAGKKKEEGNVLFKAGKYARASKRYERGVKYIEYDSTFDEEEKKKSKDLKIACNLNDAACKLKLKDYKEAAKLSTKVLEMDSRNVKAMYRRAHAYLETADLDLAELDIKKALEIDPDNKEVKIEYKKLKEKVKEYNKKDAKFYSNMLSKMLEPHKGTQKEAQAMSIDTKA</sequence>
<reference key="1">
    <citation type="journal article" date="1998" name="DNA Res.">
        <title>Structural analysis of Arabidopsis thaliana chromosome 5. VII. Sequence features of the regions of 1,013,767 bp covered by sixteen physically assigned P1 and TAC clones.</title>
        <authorList>
            <person name="Nakamura Y."/>
            <person name="Sato S."/>
            <person name="Asamizu E."/>
            <person name="Kaneko T."/>
            <person name="Kotani H."/>
            <person name="Miyajima N."/>
            <person name="Tabata S."/>
        </authorList>
    </citation>
    <scope>NUCLEOTIDE SEQUENCE [LARGE SCALE GENOMIC DNA]</scope>
    <source>
        <strain>cv. Columbia</strain>
    </source>
</reference>
<reference key="2">
    <citation type="journal article" date="2017" name="Plant J.">
        <title>Araport11: a complete reannotation of the Arabidopsis thaliana reference genome.</title>
        <authorList>
            <person name="Cheng C.Y."/>
            <person name="Krishnakumar V."/>
            <person name="Chan A.P."/>
            <person name="Thibaud-Nissen F."/>
            <person name="Schobel S."/>
            <person name="Town C.D."/>
        </authorList>
    </citation>
    <scope>GENOME REANNOTATION</scope>
    <source>
        <strain>cv. Columbia</strain>
    </source>
</reference>
<reference key="3">
    <citation type="submission" date="2006-07" db="EMBL/GenBank/DDBJ databases">
        <title>Large-scale analysis of RIKEN Arabidopsis full-length (RAFL) cDNAs.</title>
        <authorList>
            <person name="Totoki Y."/>
            <person name="Seki M."/>
            <person name="Ishida J."/>
            <person name="Nakajima M."/>
            <person name="Enju A."/>
            <person name="Kamiya A."/>
            <person name="Narusaka M."/>
            <person name="Shin-i T."/>
            <person name="Nakagawa M."/>
            <person name="Sakamoto N."/>
            <person name="Oishi K."/>
            <person name="Kohara Y."/>
            <person name="Kobayashi M."/>
            <person name="Toyoda A."/>
            <person name="Sakaki Y."/>
            <person name="Sakurai T."/>
            <person name="Iida K."/>
            <person name="Akiyama K."/>
            <person name="Satou M."/>
            <person name="Toyoda T."/>
            <person name="Konagaya A."/>
            <person name="Carninci P."/>
            <person name="Kawai J."/>
            <person name="Hayashizaki Y."/>
            <person name="Shinozaki K."/>
        </authorList>
    </citation>
    <scope>NUCLEOTIDE SEQUENCE [LARGE SCALE MRNA]</scope>
    <source>
        <strain>cv. Columbia</strain>
    </source>
</reference>
<reference key="4">
    <citation type="journal article" date="2009" name="DNA Res.">
        <title>Analysis of multiple occurrences of alternative splicing events in Arabidopsis thaliana using novel sequenced full-length cDNAs.</title>
        <authorList>
            <person name="Iida K."/>
            <person name="Fukami-Kobayashi K."/>
            <person name="Toyoda A."/>
            <person name="Sakaki Y."/>
            <person name="Kobayashi M."/>
            <person name="Seki M."/>
            <person name="Shinozaki K."/>
        </authorList>
    </citation>
    <scope>NUCLEOTIDE SEQUENCE [LARGE SCALE MRNA] OF 1-453</scope>
    <source>
        <strain>cv. Columbia</strain>
        <tissue>Rosette leaf</tissue>
    </source>
</reference>
<reference key="5">
    <citation type="journal article" date="2004" name="Plant Physiol.">
        <title>Immunophilins and parvulins. Superfamily of peptidyl prolyl isomerases in Arabidopsis.</title>
        <authorList>
            <person name="He Z."/>
            <person name="Li L."/>
            <person name="Luan S."/>
        </authorList>
    </citation>
    <scope>GENE FAMILY</scope>
    <scope>NOMENCLATURE</scope>
</reference>
<reference key="6">
    <citation type="journal article" date="2007" name="Plant Mol. Biol.">
        <title>Arabidopsis immunophilins ROF1 (AtFKBP62) and ROF2 (AtFKBP65) exhibit tissue specificity, are heat-stress induced, and bind HSP90.</title>
        <authorList>
            <person name="Aviezer-Hagai K."/>
            <person name="Skovorodnikova J."/>
            <person name="Galigniana M."/>
            <person name="Farchi-Pisanty O."/>
            <person name="Maayan E."/>
            <person name="Bocovza S."/>
            <person name="Efrat Y."/>
            <person name="von Koskull-Doring P."/>
            <person name="Ohad N."/>
            <person name="Breiman A."/>
        </authorList>
    </citation>
    <scope>INDUCTION BY HEAT</scope>
    <scope>TISSUE SPECIFICITY</scope>
</reference>
<reference key="7">
    <citation type="journal article" date="2010" name="Plant Mol. Biol.">
        <title>Involvement of Arabidopsis ROF2 (FKBP65) in thermotolerance.</title>
        <authorList>
            <person name="Meiri D."/>
            <person name="Tazat K."/>
            <person name="Cohen-Peer R."/>
            <person name="Farchi-Pisanty O."/>
            <person name="Aviezer-Hagai K."/>
            <person name="Avni A."/>
            <person name="Breiman A."/>
        </authorList>
    </citation>
    <scope>FUNCTION</scope>
    <scope>SUBCELLULAR LOCATION</scope>
    <scope>INDUCTION</scope>
    <scope>INTERACTION WITH FKBP62</scope>
</reference>
<reference key="8">
    <citation type="journal article" date="2012" name="Plant J.">
        <title>Peptidyl-prolyl cis-trans isomerase ROF2 modulates intracellular pH homeostasis in Arabidopsis.</title>
        <authorList>
            <person name="Bissoli G."/>
            <person name="Ninoles R."/>
            <person name="Fresquet S."/>
            <person name="Palombieri S."/>
            <person name="Bueso E."/>
            <person name="Rubio L."/>
            <person name="Garcia-Sanchez M.J."/>
            <person name="Fernandez J.A."/>
            <person name="Mulet J.M."/>
            <person name="Serrano R."/>
        </authorList>
    </citation>
    <scope>FUNCTION</scope>
    <scope>INDUCTION</scope>
    <scope>DISRUPTION PHENOTYPE</scope>
</reference>
<reference key="9">
    <citation type="journal article" date="2014" name="Gene">
        <title>Characterization of three Arabidopsis thaliana immunophilin genes involved in the plant defense response against Pseudomonas syringae.</title>
        <authorList>
            <person name="Pogorelko G.V."/>
            <person name="Mokryakova M."/>
            <person name="Fursova O.V."/>
            <person name="Abdeeva I."/>
            <person name="Piruzian E.S."/>
            <person name="Bruskin S.A."/>
        </authorList>
    </citation>
    <scope>FUNCTION</scope>
    <scope>DISRUPTION PHENOTYPE</scope>
    <scope>INDUCTION BY PATHOGEN</scope>
    <scope>SUBCELLULAR LOCATION</scope>
</reference>
<name>FKB65_ARATH</name>
<keyword id="KW-0007">Acetylation</keyword>
<keyword id="KW-0112">Calmodulin-binding</keyword>
<keyword id="KW-0143">Chaperone</keyword>
<keyword id="KW-0963">Cytoplasm</keyword>
<keyword id="KW-0413">Isomerase</keyword>
<keyword id="KW-0539">Nucleus</keyword>
<keyword id="KW-1185">Reference proteome</keyword>
<keyword id="KW-0677">Repeat</keyword>
<keyword id="KW-0802">TPR repeat</keyword>
<comment type="function">
    <text evidence="7 8 9">PPIases accelerate the folding of proteins. It catalyzes the cis-trans isomerization of proline imidic peptide bonds in oligopeptides. Co-chaperone that negatively modulates thermotolerance by interacting with FKBP62 and decreasing the HSFA2-mediated accumulation of chaperones of the small-HSPs family. Plays a positive role in tolerance to intracellular acid stress by maintaining the pH homeostasis. May be a part of transcription regulation pathways upon pathogen infection.</text>
</comment>
<comment type="catalytic activity">
    <reaction>
        <text>[protein]-peptidylproline (omega=180) = [protein]-peptidylproline (omega=0)</text>
        <dbReference type="Rhea" id="RHEA:16237"/>
        <dbReference type="Rhea" id="RHEA-COMP:10747"/>
        <dbReference type="Rhea" id="RHEA-COMP:10748"/>
        <dbReference type="ChEBI" id="CHEBI:83833"/>
        <dbReference type="ChEBI" id="CHEBI:83834"/>
        <dbReference type="EC" id="5.2.1.8"/>
    </reaction>
</comment>
<comment type="subunit">
    <text evidence="1">This PPIase probably binds calmodulin (By similarity). Forms heterodimers with FKBP62/ROF1.</text>
</comment>
<comment type="interaction">
    <interactant intactId="EBI-2620253">
        <id>Q9FJL3</id>
    </interactant>
    <interactant intactId="EBI-2409351">
        <id>Q38931</id>
        <label>FKBP62</label>
    </interactant>
    <organismsDiffer>false</organismsDiffer>
    <experiments>3</experiments>
</comment>
<comment type="subcellular location">
    <subcellularLocation>
        <location evidence="7">Cytoplasm</location>
    </subcellularLocation>
    <subcellularLocation>
        <location evidence="7 9">Nucleus</location>
    </subcellularLocation>
    <text evidence="7">Relocalization from the cytoplasm into the nucleus is induced by heat shock.</text>
</comment>
<comment type="tissue specificity">
    <text evidence="6">Expressed in the whole plant.</text>
</comment>
<comment type="induction">
    <text evidence="6 7 8 9">By heat shock and by intracellular acid stress. Up-regulated by HSFA2 and upon pathogen infection.</text>
</comment>
<comment type="disruption phenotype">
    <text evidence="8 9">Acid sensitivity and increased susceptibility to P.syringae infection.</text>
</comment>
<comment type="similarity">
    <text evidence="10">Belongs to the FKBP-type PPIase family.</text>
</comment>
<organism>
    <name type="scientific">Arabidopsis thaliana</name>
    <name type="common">Mouse-ear cress</name>
    <dbReference type="NCBI Taxonomy" id="3702"/>
    <lineage>
        <taxon>Eukaryota</taxon>
        <taxon>Viridiplantae</taxon>
        <taxon>Streptophyta</taxon>
        <taxon>Embryophyta</taxon>
        <taxon>Tracheophyta</taxon>
        <taxon>Spermatophyta</taxon>
        <taxon>Magnoliopsida</taxon>
        <taxon>eudicotyledons</taxon>
        <taxon>Gunneridae</taxon>
        <taxon>Pentapetalae</taxon>
        <taxon>rosids</taxon>
        <taxon>malvids</taxon>
        <taxon>Brassicales</taxon>
        <taxon>Brassicaceae</taxon>
        <taxon>Camelineae</taxon>
        <taxon>Arabidopsis</taxon>
    </lineage>
</organism>
<dbReference type="EC" id="5.2.1.8"/>
<dbReference type="EMBL" id="AB015468">
    <property type="protein sequence ID" value="BAB10690.1"/>
    <property type="molecule type" value="Genomic_DNA"/>
</dbReference>
<dbReference type="EMBL" id="CP002688">
    <property type="protein sequence ID" value="AED95689.1"/>
    <property type="molecule type" value="Genomic_DNA"/>
</dbReference>
<dbReference type="EMBL" id="AK228029">
    <property type="protein sequence ID" value="BAE99990.1"/>
    <property type="molecule type" value="mRNA"/>
</dbReference>
<dbReference type="EMBL" id="AK317098">
    <property type="protein sequence ID" value="BAH19789.1"/>
    <property type="molecule type" value="mRNA"/>
</dbReference>
<dbReference type="RefSeq" id="NP_199668.1">
    <property type="nucleotide sequence ID" value="NM_124233.3"/>
</dbReference>
<dbReference type="SMR" id="Q9FJL3"/>
<dbReference type="BioGRID" id="20159">
    <property type="interactions" value="6"/>
</dbReference>
<dbReference type="FunCoup" id="Q9FJL3">
    <property type="interactions" value="2067"/>
</dbReference>
<dbReference type="IntAct" id="Q9FJL3">
    <property type="interactions" value="2"/>
</dbReference>
<dbReference type="MINT" id="Q9FJL3"/>
<dbReference type="STRING" id="3702.Q9FJL3"/>
<dbReference type="iPTMnet" id="Q9FJL3"/>
<dbReference type="PaxDb" id="3702-AT5G48570.1"/>
<dbReference type="ProteomicsDB" id="230623"/>
<dbReference type="EnsemblPlants" id="AT5G48570.1">
    <property type="protein sequence ID" value="AT5G48570.1"/>
    <property type="gene ID" value="AT5G48570"/>
</dbReference>
<dbReference type="GeneID" id="834913"/>
<dbReference type="Gramene" id="AT5G48570.1">
    <property type="protein sequence ID" value="AT5G48570.1"/>
    <property type="gene ID" value="AT5G48570"/>
</dbReference>
<dbReference type="KEGG" id="ath:AT5G48570"/>
<dbReference type="Araport" id="AT5G48570"/>
<dbReference type="TAIR" id="AT5G48570">
    <property type="gene designation" value="ROF2"/>
</dbReference>
<dbReference type="eggNOG" id="KOG0543">
    <property type="taxonomic scope" value="Eukaryota"/>
</dbReference>
<dbReference type="HOGENOM" id="CLU_013615_13_4_1"/>
<dbReference type="InParanoid" id="Q9FJL3"/>
<dbReference type="OMA" id="HAFGANE"/>
<dbReference type="PhylomeDB" id="Q9FJL3"/>
<dbReference type="BRENDA" id="5.2.1.8">
    <property type="organism ID" value="399"/>
</dbReference>
<dbReference type="PRO" id="PR:Q9FJL3"/>
<dbReference type="Proteomes" id="UP000006548">
    <property type="component" value="Chromosome 5"/>
</dbReference>
<dbReference type="ExpressionAtlas" id="Q9FJL3">
    <property type="expression patterns" value="baseline and differential"/>
</dbReference>
<dbReference type="GO" id="GO:0005634">
    <property type="term" value="C:nucleus"/>
    <property type="evidence" value="ECO:0007669"/>
    <property type="project" value="UniProtKB-SubCell"/>
</dbReference>
<dbReference type="GO" id="GO:0000325">
    <property type="term" value="C:plant-type vacuole"/>
    <property type="evidence" value="ECO:0007005"/>
    <property type="project" value="TAIR"/>
</dbReference>
<dbReference type="GO" id="GO:0009536">
    <property type="term" value="C:plastid"/>
    <property type="evidence" value="ECO:0007005"/>
    <property type="project" value="TAIR"/>
</dbReference>
<dbReference type="GO" id="GO:0005516">
    <property type="term" value="F:calmodulin binding"/>
    <property type="evidence" value="ECO:0007669"/>
    <property type="project" value="UniProtKB-KW"/>
</dbReference>
<dbReference type="GO" id="GO:0003755">
    <property type="term" value="F:peptidyl-prolyl cis-trans isomerase activity"/>
    <property type="evidence" value="ECO:0007669"/>
    <property type="project" value="UniProtKB-EC"/>
</dbReference>
<dbReference type="GO" id="GO:0070370">
    <property type="term" value="P:cellular heat acclimation"/>
    <property type="evidence" value="ECO:0000315"/>
    <property type="project" value="UniProtKB"/>
</dbReference>
<dbReference type="FunFam" id="1.25.40.10:FF:000008">
    <property type="entry name" value="Peptidylprolyl isomerase"/>
    <property type="match status" value="1"/>
</dbReference>
<dbReference type="FunFam" id="3.10.50.40:FF:000012">
    <property type="entry name" value="Peptidylprolyl isomerase"/>
    <property type="match status" value="1"/>
</dbReference>
<dbReference type="FunFam" id="3.10.50.40:FF:000017">
    <property type="entry name" value="Peptidylprolyl isomerase"/>
    <property type="match status" value="1"/>
</dbReference>
<dbReference type="FunFam" id="3.10.50.40:FF:000022">
    <property type="entry name" value="Peptidylprolyl isomerase"/>
    <property type="match status" value="1"/>
</dbReference>
<dbReference type="Gene3D" id="3.10.50.40">
    <property type="match status" value="3"/>
</dbReference>
<dbReference type="Gene3D" id="1.25.40.10">
    <property type="entry name" value="Tetratricopeptide repeat domain"/>
    <property type="match status" value="1"/>
</dbReference>
<dbReference type="InterPro" id="IPR050754">
    <property type="entry name" value="FKBP4/5/8-like"/>
</dbReference>
<dbReference type="InterPro" id="IPR046357">
    <property type="entry name" value="PPIase_dom_sf"/>
</dbReference>
<dbReference type="InterPro" id="IPR001179">
    <property type="entry name" value="PPIase_FKBP_dom"/>
</dbReference>
<dbReference type="InterPro" id="IPR011990">
    <property type="entry name" value="TPR-like_helical_dom_sf"/>
</dbReference>
<dbReference type="InterPro" id="IPR019734">
    <property type="entry name" value="TPR_rpt"/>
</dbReference>
<dbReference type="PANTHER" id="PTHR46512">
    <property type="entry name" value="PEPTIDYLPROLYL ISOMERASE"/>
    <property type="match status" value="1"/>
</dbReference>
<dbReference type="PANTHER" id="PTHR46512:SF9">
    <property type="entry name" value="PEPTIDYLPROLYL ISOMERASE"/>
    <property type="match status" value="1"/>
</dbReference>
<dbReference type="Pfam" id="PF00254">
    <property type="entry name" value="FKBP_C"/>
    <property type="match status" value="3"/>
</dbReference>
<dbReference type="Pfam" id="PF14559">
    <property type="entry name" value="TPR_19"/>
    <property type="match status" value="1"/>
</dbReference>
<dbReference type="SMART" id="SM00028">
    <property type="entry name" value="TPR"/>
    <property type="match status" value="3"/>
</dbReference>
<dbReference type="SUPFAM" id="SSF54534">
    <property type="entry name" value="FKBP-like"/>
    <property type="match status" value="3"/>
</dbReference>
<dbReference type="SUPFAM" id="SSF48452">
    <property type="entry name" value="TPR-like"/>
    <property type="match status" value="1"/>
</dbReference>
<dbReference type="PROSITE" id="PS50059">
    <property type="entry name" value="FKBP_PPIASE"/>
    <property type="match status" value="3"/>
</dbReference>
<dbReference type="PROSITE" id="PS50005">
    <property type="entry name" value="TPR"/>
    <property type="match status" value="3"/>
</dbReference>
<dbReference type="PROSITE" id="PS50293">
    <property type="entry name" value="TPR_REGION"/>
    <property type="match status" value="1"/>
</dbReference>
<feature type="chain" id="PRO_0000416137" description="Peptidyl-prolyl cis-trans isomerase FKBP65">
    <location>
        <begin position="1"/>
        <end position="578"/>
    </location>
</feature>
<feature type="domain" description="PPIase FKBP-type 1" evidence="4">
    <location>
        <begin position="65"/>
        <end position="153"/>
    </location>
</feature>
<feature type="domain" description="PPIase FKBP-type 2" evidence="4">
    <location>
        <begin position="181"/>
        <end position="271"/>
    </location>
</feature>
<feature type="domain" description="PPIase FKBP-type 3" evidence="4">
    <location>
        <begin position="299"/>
        <end position="393"/>
    </location>
</feature>
<feature type="repeat" description="TPR 1">
    <location>
        <begin position="410"/>
        <end position="443"/>
    </location>
</feature>
<feature type="repeat" description="TPR 2">
    <location>
        <begin position="459"/>
        <end position="492"/>
    </location>
</feature>
<feature type="repeat" description="TPR 3">
    <location>
        <begin position="493"/>
        <end position="526"/>
    </location>
</feature>
<feature type="region of interest" description="Disordered" evidence="5">
    <location>
        <begin position="1"/>
        <end position="32"/>
    </location>
</feature>
<feature type="region of interest" description="Calmodulin-binding" evidence="3">
    <location>
        <begin position="539"/>
        <end position="555"/>
    </location>
</feature>
<feature type="compositionally biased region" description="Acidic residues" evidence="5">
    <location>
        <begin position="1"/>
        <end position="30"/>
    </location>
</feature>
<feature type="modified residue" description="N-acetylmethionine" evidence="2">
    <location>
        <position position="1"/>
    </location>
</feature>
<feature type="sequence conflict" description="In Ref. 3; BAE99990." evidence="10" ref="3">
    <original>E</original>
    <variation>G</variation>
    <location>
        <position position="205"/>
    </location>
</feature>
<proteinExistence type="evidence at protein level"/>
<gene>
    <name type="primary">FKBP65</name>
    <name type="synonym">ROF2</name>
    <name type="ordered locus">At5g48570</name>
    <name type="ORF">K15N18.12</name>
</gene>